<accession>P57522</accession>
<keyword id="KW-0963">Cytoplasm</keyword>
<keyword id="KW-1185">Reference proteome</keyword>
<keyword id="KW-0819">tRNA processing</keyword>
<feature type="chain" id="PRO_0000159030" description="Sulfur carrier protein TusA">
    <location>
        <begin position="1"/>
        <end position="76"/>
    </location>
</feature>
<feature type="active site" description="Cysteine persulfide intermediate" evidence="1">
    <location>
        <position position="14"/>
    </location>
</feature>
<dbReference type="EMBL" id="BA000003">
    <property type="protein sequence ID" value="BAB13145.1"/>
    <property type="molecule type" value="Genomic_DNA"/>
</dbReference>
<dbReference type="RefSeq" id="NP_240259.1">
    <property type="nucleotide sequence ID" value="NC_002528.1"/>
</dbReference>
<dbReference type="RefSeq" id="WP_009874401.1">
    <property type="nucleotide sequence ID" value="NZ_AP036055.1"/>
</dbReference>
<dbReference type="SMR" id="P57522"/>
<dbReference type="STRING" id="563178.BUAP5A_440"/>
<dbReference type="EnsemblBacteria" id="BAB13145">
    <property type="protein sequence ID" value="BAB13145"/>
    <property type="gene ID" value="BAB13145"/>
</dbReference>
<dbReference type="KEGG" id="buc:BU447"/>
<dbReference type="PATRIC" id="fig|107806.10.peg.457"/>
<dbReference type="eggNOG" id="COG0425">
    <property type="taxonomic scope" value="Bacteria"/>
</dbReference>
<dbReference type="HOGENOM" id="CLU_165255_5_1_6"/>
<dbReference type="Proteomes" id="UP000001806">
    <property type="component" value="Chromosome"/>
</dbReference>
<dbReference type="GO" id="GO:0005737">
    <property type="term" value="C:cytoplasm"/>
    <property type="evidence" value="ECO:0007669"/>
    <property type="project" value="UniProtKB-SubCell"/>
</dbReference>
<dbReference type="GO" id="GO:0097163">
    <property type="term" value="F:sulfur carrier activity"/>
    <property type="evidence" value="ECO:0007669"/>
    <property type="project" value="UniProtKB-UniRule"/>
</dbReference>
<dbReference type="GO" id="GO:0002143">
    <property type="term" value="P:tRNA wobble position uridine thiolation"/>
    <property type="evidence" value="ECO:0007669"/>
    <property type="project" value="InterPro"/>
</dbReference>
<dbReference type="Gene3D" id="3.30.110.40">
    <property type="entry name" value="TusA-like domain"/>
    <property type="match status" value="1"/>
</dbReference>
<dbReference type="HAMAP" id="MF_00413">
    <property type="entry name" value="Thiourid_synth_A"/>
    <property type="match status" value="1"/>
</dbReference>
<dbReference type="InterPro" id="IPR022931">
    <property type="entry name" value="Sulphur_carrier_TusA"/>
</dbReference>
<dbReference type="InterPro" id="IPR001455">
    <property type="entry name" value="TusA-like"/>
</dbReference>
<dbReference type="InterPro" id="IPR036868">
    <property type="entry name" value="TusA-like_sf"/>
</dbReference>
<dbReference type="NCBIfam" id="NF001423">
    <property type="entry name" value="PRK00299.1"/>
    <property type="match status" value="1"/>
</dbReference>
<dbReference type="PANTHER" id="PTHR33279:SF2">
    <property type="entry name" value="SULFUR CARRIER PROTEIN TUSA"/>
    <property type="match status" value="1"/>
</dbReference>
<dbReference type="PANTHER" id="PTHR33279">
    <property type="entry name" value="SULFUR CARRIER PROTEIN YEDF-RELATED"/>
    <property type="match status" value="1"/>
</dbReference>
<dbReference type="Pfam" id="PF01206">
    <property type="entry name" value="TusA"/>
    <property type="match status" value="1"/>
</dbReference>
<dbReference type="SUPFAM" id="SSF64307">
    <property type="entry name" value="SirA-like"/>
    <property type="match status" value="1"/>
</dbReference>
<dbReference type="PROSITE" id="PS01148">
    <property type="entry name" value="UPF0033"/>
    <property type="match status" value="1"/>
</dbReference>
<organism>
    <name type="scientific">Buchnera aphidicola subsp. Acyrthosiphon pisum (strain APS)</name>
    <name type="common">Acyrthosiphon pisum symbiotic bacterium</name>
    <dbReference type="NCBI Taxonomy" id="107806"/>
    <lineage>
        <taxon>Bacteria</taxon>
        <taxon>Pseudomonadati</taxon>
        <taxon>Pseudomonadota</taxon>
        <taxon>Gammaproteobacteria</taxon>
        <taxon>Enterobacterales</taxon>
        <taxon>Erwiniaceae</taxon>
        <taxon>Buchnera</taxon>
    </lineage>
</organism>
<protein>
    <recommendedName>
        <fullName evidence="1">Sulfur carrier protein TusA</fullName>
    </recommendedName>
    <alternativeName>
        <fullName evidence="1">Sulfur mediator TusA</fullName>
    </alternativeName>
    <alternativeName>
        <fullName evidence="1">Sulfur transfer protein TusA</fullName>
    </alternativeName>
    <alternativeName>
        <fullName evidence="1">tRNA 2-thiouridine synthesizing protein A</fullName>
    </alternativeName>
</protein>
<name>TUSA_BUCAI</name>
<comment type="function">
    <text evidence="1">Sulfur carrier protein involved in sulfur trafficking in the cell. Part of a sulfur-relay system required for 2-thiolation during synthesis of 2-thiouridine of the modified wobble base 5-methylaminomethyl-2-thiouridine (mnm(5)s(2)U) in tRNA. Interacts with IscS and stimulates its cysteine desulfurase activity. Accepts an activated sulfur from IscS, which is then transferred to TusD, and thus determines the direction of sulfur flow from IscS to 2-thiouridine formation. Also appears to be involved in sulfur transfer for the biosynthesis of molybdopterin.</text>
</comment>
<comment type="pathway">
    <text evidence="1">tRNA modification.</text>
</comment>
<comment type="subunit">
    <text evidence="1">Interacts with IscS.</text>
</comment>
<comment type="subcellular location">
    <subcellularLocation>
        <location evidence="1">Cytoplasm</location>
    </subcellularLocation>
</comment>
<comment type="similarity">
    <text evidence="1">Belongs to the sulfur carrier protein TusA family.</text>
</comment>
<evidence type="ECO:0000255" key="1">
    <source>
        <dbReference type="HAMAP-Rule" id="MF_00413"/>
    </source>
</evidence>
<sequence>MKKNIILNLIGLRCPEPIMIIRKTIRDMKDNEKILILSDDPATKRDIPNFCYFMEHKLLKNEIKVKPYRYLLKKGL</sequence>
<reference key="1">
    <citation type="journal article" date="2000" name="Nature">
        <title>Genome sequence of the endocellular bacterial symbiont of aphids Buchnera sp. APS.</title>
        <authorList>
            <person name="Shigenobu S."/>
            <person name="Watanabe H."/>
            <person name="Hattori M."/>
            <person name="Sakaki Y."/>
            <person name="Ishikawa H."/>
        </authorList>
    </citation>
    <scope>NUCLEOTIDE SEQUENCE [LARGE SCALE GENOMIC DNA]</scope>
    <source>
        <strain>APS</strain>
    </source>
</reference>
<gene>
    <name evidence="1" type="primary">tusA</name>
    <name type="ordered locus">BU447</name>
</gene>
<proteinExistence type="inferred from homology"/>